<name>NTPPA_CLOBM</name>
<organism>
    <name type="scientific">Clostridium botulinum (strain Loch Maree / Type A3)</name>
    <dbReference type="NCBI Taxonomy" id="498214"/>
    <lineage>
        <taxon>Bacteria</taxon>
        <taxon>Bacillati</taxon>
        <taxon>Bacillota</taxon>
        <taxon>Clostridia</taxon>
        <taxon>Eubacteriales</taxon>
        <taxon>Clostridiaceae</taxon>
        <taxon>Clostridium</taxon>
    </lineage>
</organism>
<keyword id="KW-0963">Cytoplasm</keyword>
<keyword id="KW-0378">Hydrolase</keyword>
<keyword id="KW-0546">Nucleotide metabolism</keyword>
<sequence length="194" mass="21494">MKNIILASASERRQELLKRILEDFQIIVSDFDESSIPFKDNIPSYVMNLAEGKARSVGKKIMDQDSNLVIGCDTLVAFNNKVLGKPKDKKDAFEMLQALSGNEHEVYSGLAILDVKSNKIITDFVCTKVKFSKLTSLQIEKYINTGDPMDKAGAYGIQGKAGVFVENINGCYYNVVGLPLNKLNSMLMEMGVNL</sequence>
<proteinExistence type="inferred from homology"/>
<protein>
    <recommendedName>
        <fullName evidence="1">dTTP/UTP pyrophosphatase</fullName>
        <shortName evidence="1">dTTPase/UTPase</shortName>
        <ecNumber evidence="1">3.6.1.9</ecNumber>
    </recommendedName>
    <alternativeName>
        <fullName evidence="1">Nucleoside triphosphate pyrophosphatase</fullName>
    </alternativeName>
    <alternativeName>
        <fullName evidence="1">Nucleotide pyrophosphatase</fullName>
        <shortName evidence="1">Nucleotide PPase</shortName>
    </alternativeName>
</protein>
<feature type="chain" id="PRO_1000127782" description="dTTP/UTP pyrophosphatase">
    <location>
        <begin position="1"/>
        <end position="194"/>
    </location>
</feature>
<feature type="active site" description="Proton acceptor" evidence="1">
    <location>
        <position position="73"/>
    </location>
</feature>
<feature type="site" description="Important for substrate specificity" evidence="1">
    <location>
        <position position="12"/>
    </location>
</feature>
<feature type="site" description="Important for substrate specificity" evidence="1">
    <location>
        <position position="74"/>
    </location>
</feature>
<feature type="site" description="Important for substrate specificity" evidence="1">
    <location>
        <position position="158"/>
    </location>
</feature>
<gene>
    <name type="ordered locus">CLK_2388</name>
</gene>
<evidence type="ECO:0000255" key="1">
    <source>
        <dbReference type="HAMAP-Rule" id="MF_00528"/>
    </source>
</evidence>
<comment type="function">
    <text evidence="1">Nucleoside triphosphate pyrophosphatase that hydrolyzes dTTP and UTP. May have a dual role in cell division arrest and in preventing the incorporation of modified nucleotides into cellular nucleic acids.</text>
</comment>
<comment type="catalytic activity">
    <reaction evidence="1">
        <text>dTTP + H2O = dTMP + diphosphate + H(+)</text>
        <dbReference type="Rhea" id="RHEA:28534"/>
        <dbReference type="ChEBI" id="CHEBI:15377"/>
        <dbReference type="ChEBI" id="CHEBI:15378"/>
        <dbReference type="ChEBI" id="CHEBI:33019"/>
        <dbReference type="ChEBI" id="CHEBI:37568"/>
        <dbReference type="ChEBI" id="CHEBI:63528"/>
        <dbReference type="EC" id="3.6.1.9"/>
    </reaction>
</comment>
<comment type="catalytic activity">
    <reaction evidence="1">
        <text>UTP + H2O = UMP + diphosphate + H(+)</text>
        <dbReference type="Rhea" id="RHEA:29395"/>
        <dbReference type="ChEBI" id="CHEBI:15377"/>
        <dbReference type="ChEBI" id="CHEBI:15378"/>
        <dbReference type="ChEBI" id="CHEBI:33019"/>
        <dbReference type="ChEBI" id="CHEBI:46398"/>
        <dbReference type="ChEBI" id="CHEBI:57865"/>
        <dbReference type="EC" id="3.6.1.9"/>
    </reaction>
</comment>
<comment type="cofactor">
    <cofactor evidence="1">
        <name>a divalent metal cation</name>
        <dbReference type="ChEBI" id="CHEBI:60240"/>
    </cofactor>
</comment>
<comment type="subcellular location">
    <subcellularLocation>
        <location evidence="1">Cytoplasm</location>
    </subcellularLocation>
</comment>
<comment type="similarity">
    <text evidence="1">Belongs to the Maf family. YhdE subfamily.</text>
</comment>
<dbReference type="EC" id="3.6.1.9" evidence="1"/>
<dbReference type="EMBL" id="CP000962">
    <property type="protein sequence ID" value="ACA55493.1"/>
    <property type="molecule type" value="Genomic_DNA"/>
</dbReference>
<dbReference type="RefSeq" id="WP_012343465.1">
    <property type="nucleotide sequence ID" value="NC_010520.1"/>
</dbReference>
<dbReference type="SMR" id="B1KZT1"/>
<dbReference type="KEGG" id="cbl:CLK_2388"/>
<dbReference type="HOGENOM" id="CLU_040416_0_0_9"/>
<dbReference type="GO" id="GO:0005737">
    <property type="term" value="C:cytoplasm"/>
    <property type="evidence" value="ECO:0007669"/>
    <property type="project" value="UniProtKB-SubCell"/>
</dbReference>
<dbReference type="GO" id="GO:0036218">
    <property type="term" value="F:dTTP diphosphatase activity"/>
    <property type="evidence" value="ECO:0007669"/>
    <property type="project" value="RHEA"/>
</dbReference>
<dbReference type="GO" id="GO:0036221">
    <property type="term" value="F:UTP diphosphatase activity"/>
    <property type="evidence" value="ECO:0007669"/>
    <property type="project" value="RHEA"/>
</dbReference>
<dbReference type="GO" id="GO:0009117">
    <property type="term" value="P:nucleotide metabolic process"/>
    <property type="evidence" value="ECO:0007669"/>
    <property type="project" value="UniProtKB-KW"/>
</dbReference>
<dbReference type="CDD" id="cd00555">
    <property type="entry name" value="Maf"/>
    <property type="match status" value="1"/>
</dbReference>
<dbReference type="FunFam" id="3.90.950.10:FF:000016">
    <property type="entry name" value="dTTP/UTP pyrophosphatase"/>
    <property type="match status" value="1"/>
</dbReference>
<dbReference type="Gene3D" id="3.90.950.10">
    <property type="match status" value="1"/>
</dbReference>
<dbReference type="HAMAP" id="MF_00528">
    <property type="entry name" value="Maf"/>
    <property type="match status" value="1"/>
</dbReference>
<dbReference type="InterPro" id="IPR029001">
    <property type="entry name" value="ITPase-like_fam"/>
</dbReference>
<dbReference type="InterPro" id="IPR003697">
    <property type="entry name" value="Maf-like"/>
</dbReference>
<dbReference type="NCBIfam" id="TIGR00172">
    <property type="entry name" value="maf"/>
    <property type="match status" value="1"/>
</dbReference>
<dbReference type="NCBIfam" id="NF000867">
    <property type="entry name" value="PRK00078.1"/>
    <property type="match status" value="1"/>
</dbReference>
<dbReference type="PANTHER" id="PTHR43213">
    <property type="entry name" value="BIFUNCTIONAL DTTP/UTP PYROPHOSPHATASE/METHYLTRANSFERASE PROTEIN-RELATED"/>
    <property type="match status" value="1"/>
</dbReference>
<dbReference type="PANTHER" id="PTHR43213:SF5">
    <property type="entry name" value="BIFUNCTIONAL DTTP_UTP PYROPHOSPHATASE_METHYLTRANSFERASE PROTEIN-RELATED"/>
    <property type="match status" value="1"/>
</dbReference>
<dbReference type="Pfam" id="PF02545">
    <property type="entry name" value="Maf"/>
    <property type="match status" value="1"/>
</dbReference>
<dbReference type="PIRSF" id="PIRSF006305">
    <property type="entry name" value="Maf"/>
    <property type="match status" value="1"/>
</dbReference>
<dbReference type="SUPFAM" id="SSF52972">
    <property type="entry name" value="ITPase-like"/>
    <property type="match status" value="1"/>
</dbReference>
<accession>B1KZT1</accession>
<reference key="1">
    <citation type="journal article" date="2007" name="PLoS ONE">
        <title>Analysis of the neurotoxin complex genes in Clostridium botulinum A1-A4 and B1 strains: BoNT/A3, /Ba4 and /B1 clusters are located within plasmids.</title>
        <authorList>
            <person name="Smith T.J."/>
            <person name="Hill K.K."/>
            <person name="Foley B.T."/>
            <person name="Detter J.C."/>
            <person name="Munk A.C."/>
            <person name="Bruce D.C."/>
            <person name="Doggett N.A."/>
            <person name="Smith L.A."/>
            <person name="Marks J.D."/>
            <person name="Xie G."/>
            <person name="Brettin T.S."/>
        </authorList>
    </citation>
    <scope>NUCLEOTIDE SEQUENCE [LARGE SCALE GENOMIC DNA]</scope>
    <source>
        <strain>Loch Maree / Type A3</strain>
    </source>
</reference>